<comment type="function">
    <text evidence="1">Involved in the gluconeogenesis. Catalyzes stereospecifically the conversion of dihydroxyacetone phosphate (DHAP) to D-glyceraldehyde-3-phosphate (G3P).</text>
</comment>
<comment type="catalytic activity">
    <reaction evidence="1">
        <text>D-glyceraldehyde 3-phosphate = dihydroxyacetone phosphate</text>
        <dbReference type="Rhea" id="RHEA:18585"/>
        <dbReference type="ChEBI" id="CHEBI:57642"/>
        <dbReference type="ChEBI" id="CHEBI:59776"/>
        <dbReference type="EC" id="5.3.1.1"/>
    </reaction>
</comment>
<comment type="pathway">
    <text evidence="1">Carbohydrate biosynthesis; gluconeogenesis.</text>
</comment>
<comment type="pathway">
    <text evidence="1">Carbohydrate degradation; glycolysis; D-glyceraldehyde 3-phosphate from glycerone phosphate: step 1/1.</text>
</comment>
<comment type="subunit">
    <text evidence="1">Homodimer.</text>
</comment>
<comment type="subcellular location">
    <subcellularLocation>
        <location evidence="1">Cytoplasm</location>
    </subcellularLocation>
</comment>
<comment type="similarity">
    <text evidence="1">Belongs to the triosephosphate isomerase family.</text>
</comment>
<protein>
    <recommendedName>
        <fullName evidence="1">Triosephosphate isomerase</fullName>
        <shortName evidence="1">TIM</shortName>
        <shortName evidence="1">TPI</shortName>
        <ecNumber evidence="1">5.3.1.1</ecNumber>
    </recommendedName>
    <alternativeName>
        <fullName evidence="1">Triose-phosphate isomerase</fullName>
    </alternativeName>
</protein>
<dbReference type="EC" id="5.3.1.1" evidence="1"/>
<dbReference type="EMBL" id="CP000826">
    <property type="protein sequence ID" value="ABV43898.1"/>
    <property type="molecule type" value="Genomic_DNA"/>
</dbReference>
<dbReference type="SMR" id="A8GLA8"/>
<dbReference type="STRING" id="399741.Spro_4805"/>
<dbReference type="KEGG" id="spe:Spro_4805"/>
<dbReference type="eggNOG" id="COG0149">
    <property type="taxonomic scope" value="Bacteria"/>
</dbReference>
<dbReference type="HOGENOM" id="CLU_024251_2_1_6"/>
<dbReference type="OrthoDB" id="9809429at2"/>
<dbReference type="UniPathway" id="UPA00109">
    <property type="reaction ID" value="UER00189"/>
</dbReference>
<dbReference type="UniPathway" id="UPA00138"/>
<dbReference type="GO" id="GO:0005829">
    <property type="term" value="C:cytosol"/>
    <property type="evidence" value="ECO:0007669"/>
    <property type="project" value="TreeGrafter"/>
</dbReference>
<dbReference type="GO" id="GO:0004807">
    <property type="term" value="F:triose-phosphate isomerase activity"/>
    <property type="evidence" value="ECO:0007669"/>
    <property type="project" value="UniProtKB-UniRule"/>
</dbReference>
<dbReference type="GO" id="GO:0006094">
    <property type="term" value="P:gluconeogenesis"/>
    <property type="evidence" value="ECO:0007669"/>
    <property type="project" value="UniProtKB-UniRule"/>
</dbReference>
<dbReference type="GO" id="GO:0046166">
    <property type="term" value="P:glyceraldehyde-3-phosphate biosynthetic process"/>
    <property type="evidence" value="ECO:0007669"/>
    <property type="project" value="TreeGrafter"/>
</dbReference>
<dbReference type="GO" id="GO:0019563">
    <property type="term" value="P:glycerol catabolic process"/>
    <property type="evidence" value="ECO:0007669"/>
    <property type="project" value="TreeGrafter"/>
</dbReference>
<dbReference type="GO" id="GO:0006096">
    <property type="term" value="P:glycolytic process"/>
    <property type="evidence" value="ECO:0007669"/>
    <property type="project" value="UniProtKB-UniRule"/>
</dbReference>
<dbReference type="CDD" id="cd00311">
    <property type="entry name" value="TIM"/>
    <property type="match status" value="1"/>
</dbReference>
<dbReference type="FunFam" id="3.20.20.70:FF:000020">
    <property type="entry name" value="Triosephosphate isomerase"/>
    <property type="match status" value="1"/>
</dbReference>
<dbReference type="Gene3D" id="3.20.20.70">
    <property type="entry name" value="Aldolase class I"/>
    <property type="match status" value="1"/>
</dbReference>
<dbReference type="HAMAP" id="MF_00147_B">
    <property type="entry name" value="TIM_B"/>
    <property type="match status" value="1"/>
</dbReference>
<dbReference type="InterPro" id="IPR013785">
    <property type="entry name" value="Aldolase_TIM"/>
</dbReference>
<dbReference type="InterPro" id="IPR035990">
    <property type="entry name" value="TIM_sf"/>
</dbReference>
<dbReference type="InterPro" id="IPR022896">
    <property type="entry name" value="TrioseP_Isoase_bac/euk"/>
</dbReference>
<dbReference type="InterPro" id="IPR000652">
    <property type="entry name" value="Triosephosphate_isomerase"/>
</dbReference>
<dbReference type="InterPro" id="IPR020861">
    <property type="entry name" value="Triosephosphate_isomerase_AS"/>
</dbReference>
<dbReference type="NCBIfam" id="TIGR00419">
    <property type="entry name" value="tim"/>
    <property type="match status" value="1"/>
</dbReference>
<dbReference type="PANTHER" id="PTHR21139">
    <property type="entry name" value="TRIOSEPHOSPHATE ISOMERASE"/>
    <property type="match status" value="1"/>
</dbReference>
<dbReference type="PANTHER" id="PTHR21139:SF42">
    <property type="entry name" value="TRIOSEPHOSPHATE ISOMERASE"/>
    <property type="match status" value="1"/>
</dbReference>
<dbReference type="Pfam" id="PF00121">
    <property type="entry name" value="TIM"/>
    <property type="match status" value="1"/>
</dbReference>
<dbReference type="SUPFAM" id="SSF51351">
    <property type="entry name" value="Triosephosphate isomerase (TIM)"/>
    <property type="match status" value="1"/>
</dbReference>
<dbReference type="PROSITE" id="PS00171">
    <property type="entry name" value="TIM_1"/>
    <property type="match status" value="1"/>
</dbReference>
<dbReference type="PROSITE" id="PS51440">
    <property type="entry name" value="TIM_2"/>
    <property type="match status" value="1"/>
</dbReference>
<evidence type="ECO:0000255" key="1">
    <source>
        <dbReference type="HAMAP-Rule" id="MF_00147"/>
    </source>
</evidence>
<sequence length="255" mass="26642">MRHPLVMGNWKLNGSTHMVNELIAALRNELSSVDGCGVAIAPPVMYLDQAKHALAGSRIALGAQNVDVNLSGAFTGEVSADMLKDIGAQYIIIGHSERRTYHKETDAAIAEKFAVLKTAGLIPVLCIGETDAENEAGKTEEVCARQIDAVLKTQGAEAFKGAVIAYEPIWAIGTGKSATPAQAQAVHKFIRDHIAKQDAAVAAEVIIQYGGSVNDKNAAELFTQPDIDGALVGGASLKADAFAVIVKAAAAAKKA</sequence>
<name>TPIS_SERP5</name>
<organism>
    <name type="scientific">Serratia proteamaculans (strain 568)</name>
    <dbReference type="NCBI Taxonomy" id="399741"/>
    <lineage>
        <taxon>Bacteria</taxon>
        <taxon>Pseudomonadati</taxon>
        <taxon>Pseudomonadota</taxon>
        <taxon>Gammaproteobacteria</taxon>
        <taxon>Enterobacterales</taxon>
        <taxon>Yersiniaceae</taxon>
        <taxon>Serratia</taxon>
    </lineage>
</organism>
<keyword id="KW-0963">Cytoplasm</keyword>
<keyword id="KW-0312">Gluconeogenesis</keyword>
<keyword id="KW-0324">Glycolysis</keyword>
<keyword id="KW-0413">Isomerase</keyword>
<gene>
    <name evidence="1" type="primary">tpiA</name>
    <name type="ordered locus">Spro_4805</name>
</gene>
<accession>A8GLA8</accession>
<proteinExistence type="inferred from homology"/>
<feature type="chain" id="PRO_1000058118" description="Triosephosphate isomerase">
    <location>
        <begin position="1"/>
        <end position="255"/>
    </location>
</feature>
<feature type="active site" description="Electrophile" evidence="1">
    <location>
        <position position="95"/>
    </location>
</feature>
<feature type="active site" description="Proton acceptor" evidence="1">
    <location>
        <position position="167"/>
    </location>
</feature>
<feature type="binding site" evidence="1">
    <location>
        <begin position="9"/>
        <end position="11"/>
    </location>
    <ligand>
        <name>substrate</name>
    </ligand>
</feature>
<feature type="binding site" evidence="1">
    <location>
        <position position="173"/>
    </location>
    <ligand>
        <name>substrate</name>
    </ligand>
</feature>
<feature type="binding site" evidence="1">
    <location>
        <position position="212"/>
    </location>
    <ligand>
        <name>substrate</name>
    </ligand>
</feature>
<feature type="binding site" evidence="1">
    <location>
        <begin position="233"/>
        <end position="234"/>
    </location>
    <ligand>
        <name>substrate</name>
    </ligand>
</feature>
<reference key="1">
    <citation type="submission" date="2007-09" db="EMBL/GenBank/DDBJ databases">
        <title>Complete sequence of chromosome of Serratia proteamaculans 568.</title>
        <authorList>
            <consortium name="US DOE Joint Genome Institute"/>
            <person name="Copeland A."/>
            <person name="Lucas S."/>
            <person name="Lapidus A."/>
            <person name="Barry K."/>
            <person name="Glavina del Rio T."/>
            <person name="Dalin E."/>
            <person name="Tice H."/>
            <person name="Pitluck S."/>
            <person name="Chain P."/>
            <person name="Malfatti S."/>
            <person name="Shin M."/>
            <person name="Vergez L."/>
            <person name="Schmutz J."/>
            <person name="Larimer F."/>
            <person name="Land M."/>
            <person name="Hauser L."/>
            <person name="Kyrpides N."/>
            <person name="Kim E."/>
            <person name="Taghavi S."/>
            <person name="Newman L."/>
            <person name="Vangronsveld J."/>
            <person name="van der Lelie D."/>
            <person name="Richardson P."/>
        </authorList>
    </citation>
    <scope>NUCLEOTIDE SEQUENCE [LARGE SCALE GENOMIC DNA]</scope>
    <source>
        <strain>568</strain>
    </source>
</reference>